<evidence type="ECO:0000255" key="1">
    <source>
        <dbReference type="HAMAP-Rule" id="MF_00530"/>
    </source>
</evidence>
<keyword id="KW-0066">ATP synthesis</keyword>
<keyword id="KW-0997">Cell inner membrane</keyword>
<keyword id="KW-1003">Cell membrane</keyword>
<keyword id="KW-0139">CF(1)</keyword>
<keyword id="KW-0375">Hydrogen ion transport</keyword>
<keyword id="KW-0406">Ion transport</keyword>
<keyword id="KW-0472">Membrane</keyword>
<keyword id="KW-1185">Reference proteome</keyword>
<keyword id="KW-0813">Transport</keyword>
<feature type="chain" id="PRO_0000265852" description="ATP synthase epsilon chain 1">
    <location>
        <begin position="1"/>
        <end position="138"/>
    </location>
</feature>
<sequence>MAQKLKLEMVTPAAQVLIEEVDEIAAPGSLGQFGVLPGHTPLLTTLQVGEFSYRKGSDVYYLAVNWGYVEVAEDRVLVLVETAETQDHIDLARAKAALGRAEARLRELTPADKEYHNMQAALQRAMVRIQVAGRGGRG</sequence>
<organism>
    <name type="scientific">Syntrophotalea carbinolica (strain DSM 2380 / NBRC 103641 / GraBd1)</name>
    <name type="common">Pelobacter carbinolicus</name>
    <dbReference type="NCBI Taxonomy" id="338963"/>
    <lineage>
        <taxon>Bacteria</taxon>
        <taxon>Pseudomonadati</taxon>
        <taxon>Thermodesulfobacteriota</taxon>
        <taxon>Desulfuromonadia</taxon>
        <taxon>Desulfuromonadales</taxon>
        <taxon>Syntrophotaleaceae</taxon>
        <taxon>Syntrophotalea</taxon>
    </lineage>
</organism>
<comment type="function">
    <text evidence="1">Produces ATP from ADP in the presence of a proton gradient across the membrane.</text>
</comment>
<comment type="subunit">
    <text>F-type ATPases have 2 components, CF(1) - the catalytic core - and CF(0) - the membrane proton channel. CF(1) has five subunits: alpha(3), beta(3), gamma(1), delta(1), epsilon(1). CF(0) has three main subunits: a, b and c.</text>
</comment>
<comment type="subcellular location">
    <subcellularLocation>
        <location evidence="1">Cell inner membrane</location>
        <topology evidence="1">Peripheral membrane protein</topology>
    </subcellularLocation>
</comment>
<comment type="similarity">
    <text evidence="1">Belongs to the ATPase epsilon chain family.</text>
</comment>
<dbReference type="EMBL" id="CP000142">
    <property type="protein sequence ID" value="ABA88203.1"/>
    <property type="molecule type" value="Genomic_DNA"/>
</dbReference>
<dbReference type="RefSeq" id="WP_011340674.1">
    <property type="nucleotide sequence ID" value="NC_007498.2"/>
</dbReference>
<dbReference type="SMR" id="Q3A604"/>
<dbReference type="STRING" id="338963.Pcar_0950"/>
<dbReference type="KEGG" id="pca:Pcar_0950"/>
<dbReference type="eggNOG" id="COG0355">
    <property type="taxonomic scope" value="Bacteria"/>
</dbReference>
<dbReference type="HOGENOM" id="CLU_084338_1_2_7"/>
<dbReference type="OrthoDB" id="9799969at2"/>
<dbReference type="Proteomes" id="UP000002534">
    <property type="component" value="Chromosome"/>
</dbReference>
<dbReference type="GO" id="GO:0005886">
    <property type="term" value="C:plasma membrane"/>
    <property type="evidence" value="ECO:0007669"/>
    <property type="project" value="UniProtKB-SubCell"/>
</dbReference>
<dbReference type="GO" id="GO:0045259">
    <property type="term" value="C:proton-transporting ATP synthase complex"/>
    <property type="evidence" value="ECO:0007669"/>
    <property type="project" value="UniProtKB-KW"/>
</dbReference>
<dbReference type="GO" id="GO:0005524">
    <property type="term" value="F:ATP binding"/>
    <property type="evidence" value="ECO:0007669"/>
    <property type="project" value="UniProtKB-UniRule"/>
</dbReference>
<dbReference type="GO" id="GO:0046933">
    <property type="term" value="F:proton-transporting ATP synthase activity, rotational mechanism"/>
    <property type="evidence" value="ECO:0007669"/>
    <property type="project" value="UniProtKB-UniRule"/>
</dbReference>
<dbReference type="CDD" id="cd12152">
    <property type="entry name" value="F1-ATPase_delta"/>
    <property type="match status" value="1"/>
</dbReference>
<dbReference type="Gene3D" id="1.20.5.440">
    <property type="entry name" value="ATP synthase delta/epsilon subunit, C-terminal domain"/>
    <property type="match status" value="1"/>
</dbReference>
<dbReference type="Gene3D" id="2.60.15.10">
    <property type="entry name" value="F0F1 ATP synthase delta/epsilon subunit, N-terminal"/>
    <property type="match status" value="1"/>
</dbReference>
<dbReference type="HAMAP" id="MF_00530">
    <property type="entry name" value="ATP_synth_epsil_bac"/>
    <property type="match status" value="1"/>
</dbReference>
<dbReference type="InterPro" id="IPR001469">
    <property type="entry name" value="ATP_synth_F1_dsu/esu"/>
</dbReference>
<dbReference type="InterPro" id="IPR020546">
    <property type="entry name" value="ATP_synth_F1_dsu/esu_N"/>
</dbReference>
<dbReference type="InterPro" id="IPR020547">
    <property type="entry name" value="ATP_synth_F1_esu_C"/>
</dbReference>
<dbReference type="InterPro" id="IPR036771">
    <property type="entry name" value="ATPsynth_dsu/esu_N"/>
</dbReference>
<dbReference type="NCBIfam" id="TIGR01216">
    <property type="entry name" value="ATP_synt_epsi"/>
    <property type="match status" value="1"/>
</dbReference>
<dbReference type="NCBIfam" id="NF009980">
    <property type="entry name" value="PRK13446.1"/>
    <property type="match status" value="1"/>
</dbReference>
<dbReference type="PANTHER" id="PTHR13822">
    <property type="entry name" value="ATP SYNTHASE DELTA/EPSILON CHAIN"/>
    <property type="match status" value="1"/>
</dbReference>
<dbReference type="PANTHER" id="PTHR13822:SF10">
    <property type="entry name" value="ATP SYNTHASE EPSILON CHAIN, CHLOROPLASTIC"/>
    <property type="match status" value="1"/>
</dbReference>
<dbReference type="Pfam" id="PF00401">
    <property type="entry name" value="ATP-synt_DE"/>
    <property type="match status" value="1"/>
</dbReference>
<dbReference type="Pfam" id="PF02823">
    <property type="entry name" value="ATP-synt_DE_N"/>
    <property type="match status" value="1"/>
</dbReference>
<dbReference type="SUPFAM" id="SSF51344">
    <property type="entry name" value="Epsilon subunit of F1F0-ATP synthase N-terminal domain"/>
    <property type="match status" value="1"/>
</dbReference>
<reference key="1">
    <citation type="submission" date="2005-10" db="EMBL/GenBank/DDBJ databases">
        <title>Complete sequence of Pelobacter carbinolicus DSM 2380.</title>
        <authorList>
            <person name="Copeland A."/>
            <person name="Lucas S."/>
            <person name="Lapidus A."/>
            <person name="Barry K."/>
            <person name="Detter J.C."/>
            <person name="Glavina T."/>
            <person name="Hammon N."/>
            <person name="Israni S."/>
            <person name="Pitluck S."/>
            <person name="Chertkov O."/>
            <person name="Schmutz J."/>
            <person name="Larimer F."/>
            <person name="Land M."/>
            <person name="Kyrpides N."/>
            <person name="Ivanova N."/>
            <person name="Richardson P."/>
        </authorList>
    </citation>
    <scope>NUCLEOTIDE SEQUENCE [LARGE SCALE GENOMIC DNA]</scope>
    <source>
        <strain>DSM 2380 / NBRC 103641 / GraBd1</strain>
    </source>
</reference>
<proteinExistence type="inferred from homology"/>
<name>ATPE1_SYNC1</name>
<gene>
    <name evidence="1" type="primary">atpC1</name>
    <name type="ordered locus">Pcar_0950</name>
</gene>
<protein>
    <recommendedName>
        <fullName evidence="1">ATP synthase epsilon chain 1</fullName>
    </recommendedName>
    <alternativeName>
        <fullName evidence="1">ATP synthase F1 sector epsilon subunit 1</fullName>
    </alternativeName>
    <alternativeName>
        <fullName evidence="1">F-ATPase epsilon subunit 1</fullName>
    </alternativeName>
</protein>
<accession>Q3A604</accession>